<proteinExistence type="inferred from homology"/>
<protein>
    <recommendedName>
        <fullName evidence="1">ATP synthase epsilon chain</fullName>
    </recommendedName>
    <alternativeName>
        <fullName evidence="1">ATP synthase F1 sector epsilon subunit</fullName>
    </alternativeName>
    <alternativeName>
        <fullName evidence="1">F-ATPase epsilon subunit</fullName>
    </alternativeName>
</protein>
<gene>
    <name evidence="1" type="primary">atpC</name>
    <name type="ordered locus">ROP_11810</name>
</gene>
<dbReference type="EMBL" id="AP011115">
    <property type="protein sequence ID" value="BAH49428.1"/>
    <property type="molecule type" value="Genomic_DNA"/>
</dbReference>
<dbReference type="RefSeq" id="WP_007300053.1">
    <property type="nucleotide sequence ID" value="NC_012522.1"/>
</dbReference>
<dbReference type="SMR" id="C1AVZ8"/>
<dbReference type="STRING" id="632772.ROP_11810"/>
<dbReference type="KEGG" id="rop:ROP_11810"/>
<dbReference type="PATRIC" id="fig|632772.20.peg.1251"/>
<dbReference type="HOGENOM" id="CLU_084338_4_0_11"/>
<dbReference type="OrthoDB" id="9791445at2"/>
<dbReference type="Proteomes" id="UP000002212">
    <property type="component" value="Chromosome"/>
</dbReference>
<dbReference type="GO" id="GO:0005886">
    <property type="term" value="C:plasma membrane"/>
    <property type="evidence" value="ECO:0007669"/>
    <property type="project" value="UniProtKB-SubCell"/>
</dbReference>
<dbReference type="GO" id="GO:0045259">
    <property type="term" value="C:proton-transporting ATP synthase complex"/>
    <property type="evidence" value="ECO:0007669"/>
    <property type="project" value="UniProtKB-KW"/>
</dbReference>
<dbReference type="GO" id="GO:0005524">
    <property type="term" value="F:ATP binding"/>
    <property type="evidence" value="ECO:0007669"/>
    <property type="project" value="UniProtKB-UniRule"/>
</dbReference>
<dbReference type="GO" id="GO:0046933">
    <property type="term" value="F:proton-transporting ATP synthase activity, rotational mechanism"/>
    <property type="evidence" value="ECO:0007669"/>
    <property type="project" value="UniProtKB-UniRule"/>
</dbReference>
<dbReference type="CDD" id="cd12152">
    <property type="entry name" value="F1-ATPase_delta"/>
    <property type="match status" value="1"/>
</dbReference>
<dbReference type="Gene3D" id="2.60.15.10">
    <property type="entry name" value="F0F1 ATP synthase delta/epsilon subunit, N-terminal"/>
    <property type="match status" value="1"/>
</dbReference>
<dbReference type="HAMAP" id="MF_00530">
    <property type="entry name" value="ATP_synth_epsil_bac"/>
    <property type="match status" value="1"/>
</dbReference>
<dbReference type="InterPro" id="IPR001469">
    <property type="entry name" value="ATP_synth_F1_dsu/esu"/>
</dbReference>
<dbReference type="InterPro" id="IPR020546">
    <property type="entry name" value="ATP_synth_F1_dsu/esu_N"/>
</dbReference>
<dbReference type="InterPro" id="IPR036771">
    <property type="entry name" value="ATPsynth_dsu/esu_N"/>
</dbReference>
<dbReference type="NCBIfam" id="TIGR01216">
    <property type="entry name" value="ATP_synt_epsi"/>
    <property type="match status" value="1"/>
</dbReference>
<dbReference type="NCBIfam" id="NF001852">
    <property type="entry name" value="PRK00571.2-5"/>
    <property type="match status" value="1"/>
</dbReference>
<dbReference type="NCBIfam" id="NF009977">
    <property type="entry name" value="PRK13442.1"/>
    <property type="match status" value="1"/>
</dbReference>
<dbReference type="PANTHER" id="PTHR13822">
    <property type="entry name" value="ATP SYNTHASE DELTA/EPSILON CHAIN"/>
    <property type="match status" value="1"/>
</dbReference>
<dbReference type="PANTHER" id="PTHR13822:SF10">
    <property type="entry name" value="ATP SYNTHASE EPSILON CHAIN, CHLOROPLASTIC"/>
    <property type="match status" value="1"/>
</dbReference>
<dbReference type="Pfam" id="PF02823">
    <property type="entry name" value="ATP-synt_DE_N"/>
    <property type="match status" value="1"/>
</dbReference>
<dbReference type="SUPFAM" id="SSF51344">
    <property type="entry name" value="Epsilon subunit of F1F0-ATP synthase N-terminal domain"/>
    <property type="match status" value="1"/>
</dbReference>
<sequence>MAEMTVELVAVERRLWSGSATLVSAQTTEGEIGVMPGHEPVLGQLVEGGVVAITTADGERIVAAVHGGFLSVTAKTVTILAESADLAEDIDVEAAKAVLAESGDDLEAIAVAKGRVRAVERA</sequence>
<reference key="1">
    <citation type="submission" date="2009-03" db="EMBL/GenBank/DDBJ databases">
        <title>Comparison of the complete genome sequences of Rhodococcus erythropolis PR4 and Rhodococcus opacus B4.</title>
        <authorList>
            <person name="Takarada H."/>
            <person name="Sekine M."/>
            <person name="Hosoyama A."/>
            <person name="Yamada R."/>
            <person name="Fujisawa T."/>
            <person name="Omata S."/>
            <person name="Shimizu A."/>
            <person name="Tsukatani N."/>
            <person name="Tanikawa S."/>
            <person name="Fujita N."/>
            <person name="Harayama S."/>
        </authorList>
    </citation>
    <scope>NUCLEOTIDE SEQUENCE [LARGE SCALE GENOMIC DNA]</scope>
    <source>
        <strain>B4</strain>
    </source>
</reference>
<feature type="chain" id="PRO_1000146343" description="ATP synthase epsilon chain">
    <location>
        <begin position="1"/>
        <end position="122"/>
    </location>
</feature>
<organism>
    <name type="scientific">Rhodococcus opacus (strain B4)</name>
    <dbReference type="NCBI Taxonomy" id="632772"/>
    <lineage>
        <taxon>Bacteria</taxon>
        <taxon>Bacillati</taxon>
        <taxon>Actinomycetota</taxon>
        <taxon>Actinomycetes</taxon>
        <taxon>Mycobacteriales</taxon>
        <taxon>Nocardiaceae</taxon>
        <taxon>Rhodococcus</taxon>
    </lineage>
</organism>
<evidence type="ECO:0000255" key="1">
    <source>
        <dbReference type="HAMAP-Rule" id="MF_00530"/>
    </source>
</evidence>
<accession>C1AVZ8</accession>
<name>ATPE_RHOOB</name>
<comment type="function">
    <text evidence="1">Produces ATP from ADP in the presence of a proton gradient across the membrane.</text>
</comment>
<comment type="subunit">
    <text evidence="1">F-type ATPases have 2 components, CF(1) - the catalytic core - and CF(0) - the membrane proton channel. CF(1) has five subunits: alpha(3), beta(3), gamma(1), delta(1), epsilon(1). CF(0) has three main subunits: a, b and c.</text>
</comment>
<comment type="subcellular location">
    <subcellularLocation>
        <location evidence="1">Cell membrane</location>
        <topology evidence="1">Peripheral membrane protein</topology>
    </subcellularLocation>
</comment>
<comment type="similarity">
    <text evidence="1">Belongs to the ATPase epsilon chain family.</text>
</comment>
<keyword id="KW-0066">ATP synthesis</keyword>
<keyword id="KW-1003">Cell membrane</keyword>
<keyword id="KW-0139">CF(1)</keyword>
<keyword id="KW-0375">Hydrogen ion transport</keyword>
<keyword id="KW-0406">Ion transport</keyword>
<keyword id="KW-0472">Membrane</keyword>
<keyword id="KW-0813">Transport</keyword>